<comment type="function">
    <text evidence="1">Involved in the biosynthesis of isoprenoids. Catalyzes the 1,3-allylic rearrangement of the homoallylic substrate isopentenyl (IPP) to its allylic isomer, dimethylallyl diphosphate (DMAPP).</text>
</comment>
<comment type="catalytic activity">
    <reaction evidence="1">
        <text>isopentenyl diphosphate = dimethylallyl diphosphate</text>
        <dbReference type="Rhea" id="RHEA:23284"/>
        <dbReference type="ChEBI" id="CHEBI:57623"/>
        <dbReference type="ChEBI" id="CHEBI:128769"/>
        <dbReference type="EC" id="5.3.3.2"/>
    </reaction>
</comment>
<comment type="cofactor">
    <cofactor evidence="1">
        <name>FMN</name>
        <dbReference type="ChEBI" id="CHEBI:58210"/>
    </cofactor>
</comment>
<comment type="cofactor">
    <cofactor evidence="1">
        <name>NADPH</name>
        <dbReference type="ChEBI" id="CHEBI:57783"/>
    </cofactor>
</comment>
<comment type="cofactor">
    <cofactor evidence="1">
        <name>Mg(2+)</name>
        <dbReference type="ChEBI" id="CHEBI:18420"/>
    </cofactor>
</comment>
<comment type="subunit">
    <text evidence="1">Homooctamer. Dimer of tetramers.</text>
</comment>
<comment type="subcellular location">
    <subcellularLocation>
        <location evidence="1">Cytoplasm</location>
    </subcellularLocation>
</comment>
<comment type="similarity">
    <text evidence="1">Belongs to the IPP isomerase type 2 family.</text>
</comment>
<accession>Q2RIU8</accession>
<name>IDI2_MOOTA</name>
<proteinExistence type="inferred from homology"/>
<evidence type="ECO:0000255" key="1">
    <source>
        <dbReference type="HAMAP-Rule" id="MF_00354"/>
    </source>
</evidence>
<sequence>MNEREYIGRGRRKLEHLRFFQEDSKGSNGLEDVHLVHQALPELNWSDIDLTCRWLGKTLAAPFIINALTGGPPETLAINAALARVARRTGIALAVGSQRAGLENKEWRESFTIVRRENANGLILANIGAGNSPADAGEAVAMIAADGLQVHLNAAQELIMPEGDRAFRGWLENIRGMVNTLGVPVIAKEVGFGLSRETALQLYQAGVRIMDVGGRGGTNFAAIEERRRGRSVAALAGWGLSTAVSILEIRELGLPVEVVATGGIRSALDAARALALGAKIVGAAGYFLKILLEQGEDALTEEILQWQEDLKRICLLTGCTTPAELATKPVVITGQTRAWLEGRQRH</sequence>
<protein>
    <recommendedName>
        <fullName evidence="1">Isopentenyl-diphosphate delta-isomerase</fullName>
        <shortName evidence="1">IPP isomerase</shortName>
        <ecNumber evidence="1">5.3.3.2</ecNumber>
    </recommendedName>
    <alternativeName>
        <fullName evidence="1">Isopentenyl diphosphate:dimethylallyl diphosphate isomerase</fullName>
    </alternativeName>
    <alternativeName>
        <fullName evidence="1">Isopentenyl pyrophosphate isomerase</fullName>
    </alternativeName>
    <alternativeName>
        <fullName evidence="1">Type 2 isopentenyl diphosphate isomerase</fullName>
        <shortName evidence="1">IDI-2</shortName>
    </alternativeName>
</protein>
<feature type="chain" id="PRO_0000229505" description="Isopentenyl-diphosphate delta-isomerase">
    <location>
        <begin position="1"/>
        <end position="346"/>
    </location>
</feature>
<feature type="binding site" evidence="1">
    <location>
        <begin position="12"/>
        <end position="13"/>
    </location>
    <ligand>
        <name>substrate</name>
    </ligand>
</feature>
<feature type="binding site" evidence="1">
    <location>
        <begin position="67"/>
        <end position="69"/>
    </location>
    <ligand>
        <name>FMN</name>
        <dbReference type="ChEBI" id="CHEBI:58210"/>
    </ligand>
</feature>
<feature type="binding site" evidence="1">
    <location>
        <begin position="97"/>
        <end position="99"/>
    </location>
    <ligand>
        <name>substrate</name>
    </ligand>
</feature>
<feature type="binding site" evidence="1">
    <location>
        <position position="97"/>
    </location>
    <ligand>
        <name>FMN</name>
        <dbReference type="ChEBI" id="CHEBI:58210"/>
    </ligand>
</feature>
<feature type="binding site" evidence="1">
    <location>
        <position position="126"/>
    </location>
    <ligand>
        <name>FMN</name>
        <dbReference type="ChEBI" id="CHEBI:58210"/>
    </ligand>
</feature>
<feature type="binding site" evidence="1">
    <location>
        <position position="156"/>
    </location>
    <ligand>
        <name>substrate</name>
    </ligand>
</feature>
<feature type="binding site" evidence="1">
    <location>
        <position position="157"/>
    </location>
    <ligand>
        <name>Mg(2+)</name>
        <dbReference type="ChEBI" id="CHEBI:18420"/>
    </ligand>
</feature>
<feature type="binding site" evidence="1">
    <location>
        <position position="188"/>
    </location>
    <ligand>
        <name>FMN</name>
        <dbReference type="ChEBI" id="CHEBI:58210"/>
    </ligand>
</feature>
<feature type="binding site" evidence="1">
    <location>
        <position position="218"/>
    </location>
    <ligand>
        <name>FMN</name>
        <dbReference type="ChEBI" id="CHEBI:58210"/>
    </ligand>
</feature>
<feature type="binding site" evidence="1">
    <location>
        <begin position="263"/>
        <end position="265"/>
    </location>
    <ligand>
        <name>FMN</name>
        <dbReference type="ChEBI" id="CHEBI:58210"/>
    </ligand>
</feature>
<feature type="binding site" evidence="1">
    <location>
        <begin position="284"/>
        <end position="285"/>
    </location>
    <ligand>
        <name>FMN</name>
        <dbReference type="ChEBI" id="CHEBI:58210"/>
    </ligand>
</feature>
<keyword id="KW-0963">Cytoplasm</keyword>
<keyword id="KW-0285">Flavoprotein</keyword>
<keyword id="KW-0288">FMN</keyword>
<keyword id="KW-0413">Isomerase</keyword>
<keyword id="KW-0414">Isoprene biosynthesis</keyword>
<keyword id="KW-0460">Magnesium</keyword>
<keyword id="KW-0479">Metal-binding</keyword>
<keyword id="KW-0521">NADP</keyword>
<reference key="1">
    <citation type="journal article" date="2008" name="Environ. Microbiol.">
        <title>The complete genome sequence of Moorella thermoacetica (f. Clostridium thermoaceticum).</title>
        <authorList>
            <person name="Pierce E."/>
            <person name="Xie G."/>
            <person name="Barabote R.D."/>
            <person name="Saunders E."/>
            <person name="Han C.S."/>
            <person name="Detter J.C."/>
            <person name="Richardson P."/>
            <person name="Brettin T.S."/>
            <person name="Das A."/>
            <person name="Ljungdahl L.G."/>
            <person name="Ragsdale S.W."/>
        </authorList>
    </citation>
    <scope>NUCLEOTIDE SEQUENCE [LARGE SCALE GENOMIC DNA]</scope>
    <source>
        <strain>ATCC 39073 / JCM 9320</strain>
    </source>
</reference>
<organism>
    <name type="scientific">Moorella thermoacetica (strain ATCC 39073 / JCM 9320)</name>
    <dbReference type="NCBI Taxonomy" id="264732"/>
    <lineage>
        <taxon>Bacteria</taxon>
        <taxon>Bacillati</taxon>
        <taxon>Bacillota</taxon>
        <taxon>Clostridia</taxon>
        <taxon>Moorellales</taxon>
        <taxon>Moorellaceae</taxon>
        <taxon>Moorella</taxon>
    </lineage>
</organism>
<dbReference type="EC" id="5.3.3.2" evidence="1"/>
<dbReference type="EMBL" id="CP000232">
    <property type="protein sequence ID" value="ABC19641.1"/>
    <property type="molecule type" value="Genomic_DNA"/>
</dbReference>
<dbReference type="RefSeq" id="YP_430184.1">
    <property type="nucleotide sequence ID" value="NC_007644.1"/>
</dbReference>
<dbReference type="SMR" id="Q2RIU8"/>
<dbReference type="STRING" id="264732.Moth_1328"/>
<dbReference type="EnsemblBacteria" id="ABC19641">
    <property type="protein sequence ID" value="ABC19641"/>
    <property type="gene ID" value="Moth_1328"/>
</dbReference>
<dbReference type="KEGG" id="mta:Moth_1328"/>
<dbReference type="PATRIC" id="fig|264732.11.peg.1426"/>
<dbReference type="eggNOG" id="COG1304">
    <property type="taxonomic scope" value="Bacteria"/>
</dbReference>
<dbReference type="HOGENOM" id="CLU_065515_0_0_9"/>
<dbReference type="OrthoDB" id="9795032at2"/>
<dbReference type="GO" id="GO:0005737">
    <property type="term" value="C:cytoplasm"/>
    <property type="evidence" value="ECO:0007669"/>
    <property type="project" value="UniProtKB-SubCell"/>
</dbReference>
<dbReference type="GO" id="GO:0010181">
    <property type="term" value="F:FMN binding"/>
    <property type="evidence" value="ECO:0007669"/>
    <property type="project" value="UniProtKB-UniRule"/>
</dbReference>
<dbReference type="GO" id="GO:0004452">
    <property type="term" value="F:isopentenyl-diphosphate delta-isomerase activity"/>
    <property type="evidence" value="ECO:0007669"/>
    <property type="project" value="UniProtKB-UniRule"/>
</dbReference>
<dbReference type="GO" id="GO:0000287">
    <property type="term" value="F:magnesium ion binding"/>
    <property type="evidence" value="ECO:0007669"/>
    <property type="project" value="UniProtKB-UniRule"/>
</dbReference>
<dbReference type="GO" id="GO:0070402">
    <property type="term" value="F:NADPH binding"/>
    <property type="evidence" value="ECO:0007669"/>
    <property type="project" value="UniProtKB-UniRule"/>
</dbReference>
<dbReference type="GO" id="GO:0016491">
    <property type="term" value="F:oxidoreductase activity"/>
    <property type="evidence" value="ECO:0007669"/>
    <property type="project" value="InterPro"/>
</dbReference>
<dbReference type="GO" id="GO:0008299">
    <property type="term" value="P:isoprenoid biosynthetic process"/>
    <property type="evidence" value="ECO:0007669"/>
    <property type="project" value="UniProtKB-UniRule"/>
</dbReference>
<dbReference type="CDD" id="cd02811">
    <property type="entry name" value="IDI-2_FMN"/>
    <property type="match status" value="1"/>
</dbReference>
<dbReference type="Gene3D" id="3.20.20.70">
    <property type="entry name" value="Aldolase class I"/>
    <property type="match status" value="1"/>
</dbReference>
<dbReference type="HAMAP" id="MF_00354">
    <property type="entry name" value="Idi_2"/>
    <property type="match status" value="1"/>
</dbReference>
<dbReference type="InterPro" id="IPR013785">
    <property type="entry name" value="Aldolase_TIM"/>
</dbReference>
<dbReference type="InterPro" id="IPR000262">
    <property type="entry name" value="FMN-dep_DH"/>
</dbReference>
<dbReference type="InterPro" id="IPR011179">
    <property type="entry name" value="IPdP_isomerase"/>
</dbReference>
<dbReference type="NCBIfam" id="TIGR02151">
    <property type="entry name" value="IPP_isom_2"/>
    <property type="match status" value="1"/>
</dbReference>
<dbReference type="PANTHER" id="PTHR43665">
    <property type="entry name" value="ISOPENTENYL-DIPHOSPHATE DELTA-ISOMERASE"/>
    <property type="match status" value="1"/>
</dbReference>
<dbReference type="PANTHER" id="PTHR43665:SF1">
    <property type="entry name" value="ISOPENTENYL-DIPHOSPHATE DELTA-ISOMERASE"/>
    <property type="match status" value="1"/>
</dbReference>
<dbReference type="Pfam" id="PF01070">
    <property type="entry name" value="FMN_dh"/>
    <property type="match status" value="1"/>
</dbReference>
<dbReference type="PIRSF" id="PIRSF003314">
    <property type="entry name" value="IPP_isomerase"/>
    <property type="match status" value="1"/>
</dbReference>
<dbReference type="SUPFAM" id="SSF51395">
    <property type="entry name" value="FMN-linked oxidoreductases"/>
    <property type="match status" value="1"/>
</dbReference>
<gene>
    <name evidence="1" type="primary">fni</name>
    <name type="ordered locus">Moth_1328</name>
</gene>